<accession>Q9HD40</accession>
<accession>A8K8W1</accession>
<accession>Q0D2P3</accession>
<accession>Q17RT1</accession>
<accession>Q9NXZ5</accession>
<accession>Q9UGM9</accession>
<accession>Q9Y353</accession>
<proteinExistence type="evidence at protein level"/>
<feature type="chain" id="PRO_0000219875" description="O-phosphoseryl-tRNA(Sec) selenium transferase">
    <location>
        <begin position="1"/>
        <end position="501"/>
    </location>
</feature>
<feature type="region of interest" description="Tetramerization" evidence="4">
    <location>
        <begin position="1"/>
        <end position="44"/>
    </location>
</feature>
<feature type="region of interest" description="Phosphate loop (P-loop)" evidence="4">
    <location>
        <begin position="96"/>
        <end position="106"/>
    </location>
</feature>
<feature type="region of interest" description="SLA/LP epitope" evidence="2">
    <location>
        <begin position="474"/>
        <end position="493"/>
    </location>
</feature>
<feature type="binding site" evidence="4">
    <location>
        <position position="75"/>
    </location>
    <ligand>
        <name>pyridoxal 5'-phosphate</name>
        <dbReference type="ChEBI" id="CHEBI:597326"/>
    </ligand>
</feature>
<feature type="binding site" evidence="4">
    <location>
        <position position="97"/>
    </location>
    <ligand>
        <name>substrate</name>
    </ligand>
</feature>
<feature type="binding site" evidence="4">
    <location>
        <position position="98"/>
    </location>
    <ligand>
        <name>substrate</name>
    </ligand>
</feature>
<feature type="binding site" evidence="4">
    <location>
        <position position="105"/>
    </location>
    <ligand>
        <name>substrate</name>
    </ligand>
</feature>
<feature type="binding site" evidence="4">
    <location>
        <position position="271"/>
    </location>
    <ligand>
        <name>tRNA</name>
        <dbReference type="ChEBI" id="CHEBI:17843"/>
    </ligand>
    <ligandPart>
        <name>tRNA variable arm</name>
    </ligandPart>
</feature>
<feature type="binding site" evidence="4">
    <location>
        <position position="313"/>
    </location>
    <ligand>
        <name>substrate</name>
    </ligand>
</feature>
<feature type="binding site" evidence="4">
    <location>
        <position position="398"/>
    </location>
    <ligand>
        <name>tRNA</name>
        <dbReference type="ChEBI" id="CHEBI:17843"/>
    </ligand>
    <ligandPart>
        <name>tRNA discriminator base</name>
    </ligandPart>
</feature>
<feature type="binding site" evidence="4">
    <location>
        <position position="463"/>
    </location>
    <ligand>
        <name>tRNA</name>
        <dbReference type="ChEBI" id="CHEBI:17843"/>
    </ligand>
    <ligandPart>
        <name>tRNA acceptor arm</name>
    </ligandPart>
</feature>
<feature type="site" description="May act as a substrate filter by repelling compounds with a negatively charged alpha-carboxylate" evidence="1">
    <location>
        <position position="74"/>
    </location>
</feature>
<feature type="modified residue" description="Phosphoserine" evidence="10">
    <location>
        <position position="14"/>
    </location>
</feature>
<feature type="modified residue" description="N6-(pyridoxal phosphate)lysine" evidence="4">
    <location>
        <position position="284"/>
    </location>
</feature>
<feature type="splice variant" id="VSP_038080" description="In isoform 3." evidence="8">
    <original>MNRESFAAGERLVSPAYVRQGCEARRSHEHLIRLLLEK</original>
    <variation>MQCDDLGSLQPPPPGFTPFACLSLPSSWDYRRPPPHP</variation>
    <location>
        <begin position="1"/>
        <end position="38"/>
    </location>
</feature>
<feature type="splice variant" id="VSP_038078" description="In isoform 2." evidence="7 8">
    <original>GKCPENGWD</original>
    <variation>VHSWHWTIR</variation>
    <location>
        <begin position="39"/>
        <end position="47"/>
    </location>
</feature>
<feature type="splice variant" id="VSP_038079" description="In isoform 2." evidence="7 8">
    <location>
        <begin position="48"/>
        <end position="501"/>
    </location>
</feature>
<feature type="sequence variant" id="VAR_065585" description="In PCH2D; abrogates enzyme activity; dbSNP:rs267607035." evidence="5">
    <original>A</original>
    <variation>T</variation>
    <location>
        <position position="239"/>
    </location>
</feature>
<feature type="sequence variant" id="VAR_074163" description="In PCH2D; dbSNP:rs1461368206." evidence="6">
    <original>T</original>
    <variation>S</variation>
    <location>
        <position position="325"/>
    </location>
</feature>
<feature type="sequence variant" id="VAR_065586" description="In PCH2D; abrogates enzyme activity; dbSNP:rs267607036." evidence="5">
    <original>Y</original>
    <variation>C</variation>
    <location>
        <position position="334"/>
    </location>
</feature>
<feature type="mutagenesis site" description="Inactive in vivo." evidence="4">
    <original>R</original>
    <variation>A</variation>
    <location>
        <position position="75"/>
    </location>
</feature>
<feature type="mutagenesis site" description="Indistinguishable from wild-type." evidence="4">
    <original>R</original>
    <variation>A</variation>
    <location>
        <position position="97"/>
    </location>
</feature>
<feature type="mutagenesis site" description="Indistinguishable from wild-type." evidence="4">
    <original>R</original>
    <variation>Q</variation>
    <location>
        <position position="97"/>
    </location>
</feature>
<feature type="mutagenesis site" description="Inactive in vivo." evidence="4">
    <original>Q</original>
    <variation>A</variation>
    <location>
        <position position="105"/>
    </location>
</feature>
<feature type="mutagenesis site" description="Indistinguishable from wild-type." evidence="4">
    <original>K</original>
    <variation>A</variation>
    <location>
        <position position="173"/>
    </location>
</feature>
<feature type="mutagenesis site" description="Indistinguishable from wild-type." evidence="4">
    <original>K</original>
    <variation>M</variation>
    <location>
        <position position="173"/>
    </location>
</feature>
<feature type="mutagenesis site" description="Loss of activity." evidence="3">
    <original>K</original>
    <variation>A</variation>
    <location>
        <position position="284"/>
    </location>
</feature>
<feature type="mutagenesis site" description="Inactive in vivo." evidence="4">
    <original>R</original>
    <variation>A</variation>
    <location>
        <position position="313"/>
    </location>
</feature>
<feature type="sequence conflict" description="In Ref. 8; AAG00491." evidence="9" ref="8">
    <original>S</original>
    <variation>P</variation>
    <location>
        <position position="98"/>
    </location>
</feature>
<feature type="sequence conflict" description="In Ref. 1; BAF85165." evidence="9" ref="1">
    <original>H</original>
    <variation>R</variation>
    <location>
        <position position="264"/>
    </location>
</feature>
<feature type="sequence conflict" description="In Ref. 6; AAD33963/CAB89517." evidence="9" ref="6">
    <original>R</original>
    <variation>K</variation>
    <location>
        <position position="398"/>
    </location>
</feature>
<feature type="sequence conflict" description="In Ref. 6; AAD33963/CAB89517." evidence="9" ref="6">
    <original>K</original>
    <variation>N</variation>
    <location>
        <position position="452"/>
    </location>
</feature>
<feature type="sequence conflict" description="In Ref. 8; AAG00491." evidence="9" ref="8">
    <original>K</original>
    <variation>R</variation>
    <location>
        <position position="467"/>
    </location>
</feature>
<feature type="turn" evidence="12">
    <location>
        <begin position="10"/>
        <end position="12"/>
    </location>
</feature>
<feature type="helix" evidence="13">
    <location>
        <begin position="15"/>
        <end position="38"/>
    </location>
</feature>
<feature type="helix" evidence="13">
    <location>
        <begin position="48"/>
        <end position="59"/>
    </location>
</feature>
<feature type="helix" evidence="13">
    <location>
        <begin position="63"/>
        <end position="65"/>
    </location>
</feature>
<feature type="helix" evidence="13">
    <location>
        <begin position="82"/>
        <end position="87"/>
    </location>
</feature>
<feature type="turn" evidence="13">
    <location>
        <begin position="88"/>
        <end position="90"/>
    </location>
</feature>
<feature type="strand" evidence="11">
    <location>
        <begin position="95"/>
        <end position="97"/>
    </location>
</feature>
<feature type="strand" evidence="11">
    <location>
        <begin position="100"/>
        <end position="103"/>
    </location>
</feature>
<feature type="helix" evidence="13">
    <location>
        <begin position="109"/>
        <end position="129"/>
    </location>
</feature>
<feature type="strand" evidence="13">
    <location>
        <begin position="136"/>
        <end position="142"/>
    </location>
</feature>
<feature type="helix" evidence="13">
    <location>
        <begin position="144"/>
        <end position="158"/>
    </location>
</feature>
<feature type="strand" evidence="13">
    <location>
        <begin position="164"/>
        <end position="168"/>
    </location>
</feature>
<feature type="helix" evidence="13">
    <location>
        <begin position="173"/>
        <end position="181"/>
    </location>
</feature>
<feature type="strand" evidence="13">
    <location>
        <begin position="185"/>
        <end position="189"/>
    </location>
</feature>
<feature type="strand" evidence="13">
    <location>
        <begin position="192"/>
        <end position="194"/>
    </location>
</feature>
<feature type="strand" evidence="13">
    <location>
        <begin position="197"/>
        <end position="199"/>
    </location>
</feature>
<feature type="helix" evidence="13">
    <location>
        <begin position="202"/>
        <end position="212"/>
    </location>
</feature>
<feature type="helix" evidence="13">
    <location>
        <begin position="214"/>
        <end position="216"/>
    </location>
</feature>
<feature type="strand" evidence="13">
    <location>
        <begin position="217"/>
        <end position="225"/>
    </location>
</feature>
<feature type="helix" evidence="13">
    <location>
        <begin position="235"/>
        <end position="245"/>
    </location>
</feature>
<feature type="strand" evidence="13">
    <location>
        <begin position="249"/>
        <end position="252"/>
    </location>
</feature>
<feature type="helix" evidence="13">
    <location>
        <begin position="260"/>
        <end position="272"/>
    </location>
</feature>
<feature type="strand" evidence="13">
    <location>
        <begin position="277"/>
        <end position="281"/>
    </location>
</feature>
<feature type="helix" evidence="13">
    <location>
        <begin position="282"/>
        <end position="286"/>
    </location>
</feature>
<feature type="strand" evidence="13">
    <location>
        <begin position="293"/>
        <end position="298"/>
    </location>
</feature>
<feature type="helix" evidence="13">
    <location>
        <begin position="300"/>
        <end position="309"/>
    </location>
</feature>
<feature type="helix" evidence="13">
    <location>
        <begin position="317"/>
        <end position="358"/>
    </location>
</feature>
<feature type="strand" evidence="13">
    <location>
        <begin position="370"/>
        <end position="376"/>
    </location>
</feature>
<feature type="turn" evidence="13">
    <location>
        <begin position="382"/>
        <end position="384"/>
    </location>
</feature>
<feature type="helix" evidence="13">
    <location>
        <begin position="387"/>
        <end position="397"/>
    </location>
</feature>
<feature type="strand" evidence="13">
    <location>
        <begin position="404"/>
        <end position="406"/>
    </location>
</feature>
<feature type="strand" evidence="13">
    <location>
        <begin position="411"/>
        <end position="414"/>
    </location>
</feature>
<feature type="strand" evidence="13">
    <location>
        <begin position="417"/>
        <end position="421"/>
    </location>
</feature>
<feature type="turn" evidence="13">
    <location>
        <begin position="422"/>
        <end position="425"/>
    </location>
</feature>
<feature type="strand" evidence="11">
    <location>
        <begin position="426"/>
        <end position="428"/>
    </location>
</feature>
<feature type="strand" evidence="13">
    <location>
        <begin position="433"/>
        <end position="437"/>
    </location>
</feature>
<feature type="helix" evidence="13">
    <location>
        <begin position="444"/>
        <end position="466"/>
    </location>
</feature>
<feature type="helix" evidence="13">
    <location>
        <begin position="479"/>
        <end position="490"/>
    </location>
</feature>
<protein>
    <recommendedName>
        <fullName>O-phosphoseryl-tRNA(Sec) selenium transferase</fullName>
        <ecNumber evidence="3">2.9.1.2</ecNumber>
    </recommendedName>
    <alternativeName>
        <fullName>Liver-pancreas antigen</fullName>
        <shortName>LP</shortName>
    </alternativeName>
    <alternativeName>
        <fullName>SLA-p35</fullName>
    </alternativeName>
    <alternativeName>
        <fullName>SLA/LP autoantigen</fullName>
    </alternativeName>
    <alternativeName>
        <fullName>Selenocysteine synthase</fullName>
        <shortName>Sec synthase</shortName>
    </alternativeName>
    <alternativeName>
        <fullName>Selenocysteinyl-tRNA(Sec) synthase</fullName>
    </alternativeName>
    <alternativeName>
        <fullName>Sep-tRNA:Sec-tRNA synthase</fullName>
        <shortName>SepSecS</shortName>
    </alternativeName>
    <alternativeName>
        <fullName>Soluble liver antigen</fullName>
        <shortName>SLA</shortName>
    </alternativeName>
    <alternativeName>
        <fullName>UGA suppressor tRNA-associated protein</fullName>
    </alternativeName>
    <alternativeName>
        <fullName>tRNA(Ser/Sec)-associated antigenic protein</fullName>
    </alternativeName>
</protein>
<keyword id="KW-0002">3D-structure</keyword>
<keyword id="KW-0025">Alternative splicing</keyword>
<keyword id="KW-0963">Cytoplasm</keyword>
<keyword id="KW-0225">Disease variant</keyword>
<keyword id="KW-0887">Epilepsy</keyword>
<keyword id="KW-0991">Intellectual disability</keyword>
<keyword id="KW-0523">Neurodegeneration</keyword>
<keyword id="KW-0597">Phosphoprotein</keyword>
<keyword id="KW-0648">Protein biosynthesis</keyword>
<keyword id="KW-1267">Proteomics identification</keyword>
<keyword id="KW-0663">Pyridoxal phosphate</keyword>
<keyword id="KW-1185">Reference proteome</keyword>
<keyword id="KW-0694">RNA-binding</keyword>
<keyword id="KW-0711">Selenium</keyword>
<keyword id="KW-0808">Transferase</keyword>
<keyword id="KW-0820">tRNA-binding</keyword>
<sequence length="501" mass="55726">MNRESFAAGERLVSPAYVRQGCEARRSHEHLIRLLLEKGKCPENGWDESTLELFLHELAIMDSNNFLGNCGVGEREGRVASALVARRHYRFIHGIGRSGDISAVQPKAAGSSLLNKITNSLVLDIIKLAGVHTVANCFVVPMATGMSLTLCFLTLRHKRPKAKYIIWPRIDQKSCFKSMITAGFEPVVIENVLEGDELRTDLKAVEAKVQELGPDCILCIHSTTSCFAPRVPDRLEELAVICANYDIPHIVNNAYGVQSSKCMHLIQQGARVGRIDAFVQSLDKNFMVPVGGAIIAGFNDSFIQEISKMYPGRASASPSLDVLITLLSLGSNGYKKLLKERKEMFSYLSNQIKKLSEAYNERLLHTPHNPISLAMTLKTLDEHRDKAVTQLGSMLFTRQVSGARVVPLGSMQTVSGYTFRGFMSHTNNYPCAYLNAASAIGMKMQDVDLFIKRLDRCLKAVRKERSKESDDNYDKTEDVDIEEMALKLDNVLLDTYQDASS</sequence>
<dbReference type="EC" id="2.9.1.2" evidence="3"/>
<dbReference type="EMBL" id="AK292476">
    <property type="protein sequence ID" value="BAF85165.1"/>
    <property type="molecule type" value="mRNA"/>
</dbReference>
<dbReference type="EMBL" id="BX648976">
    <property type="status" value="NOT_ANNOTATED_CDS"/>
    <property type="molecule type" value="mRNA"/>
</dbReference>
<dbReference type="EMBL" id="AC007073">
    <property type="status" value="NOT_ANNOTATED_CDS"/>
    <property type="molecule type" value="Genomic_DNA"/>
</dbReference>
<dbReference type="EMBL" id="AC104662">
    <property type="status" value="NOT_ANNOTATED_CDS"/>
    <property type="molecule type" value="Genomic_DNA"/>
</dbReference>
<dbReference type="EMBL" id="CH471069">
    <property type="protein sequence ID" value="EAW92832.1"/>
    <property type="molecule type" value="Genomic_DNA"/>
</dbReference>
<dbReference type="EMBL" id="BC023539">
    <property type="protein sequence ID" value="AAH23539.1"/>
    <property type="status" value="ALT_SEQ"/>
    <property type="molecule type" value="mRNA"/>
</dbReference>
<dbReference type="EMBL" id="BC117202">
    <property type="protein sequence ID" value="AAI17203.1"/>
    <property type="molecule type" value="mRNA"/>
</dbReference>
<dbReference type="EMBL" id="AF146396">
    <property type="protein sequence ID" value="AAD33963.2"/>
    <property type="status" value="ALT_SEQ"/>
    <property type="molecule type" value="mRNA"/>
</dbReference>
<dbReference type="EMBL" id="AJ277541">
    <property type="protein sequence ID" value="CAB89517.1"/>
    <property type="status" value="ALT_FRAME"/>
    <property type="molecule type" value="mRNA"/>
</dbReference>
<dbReference type="EMBL" id="AJ238617">
    <property type="protein sequence ID" value="CAB62209.1"/>
    <property type="status" value="ALT_INIT"/>
    <property type="molecule type" value="mRNA"/>
</dbReference>
<dbReference type="EMBL" id="AF282065">
    <property type="protein sequence ID" value="AAG00491.1"/>
    <property type="molecule type" value="mRNA"/>
</dbReference>
<dbReference type="CCDS" id="CCDS3432.2">
    <molecule id="Q9HD40-1"/>
</dbReference>
<dbReference type="RefSeq" id="NP_058651.3">
    <molecule id="Q9HD40-1"/>
    <property type="nucleotide sequence ID" value="NM_016955.4"/>
</dbReference>
<dbReference type="RefSeq" id="XP_011512148.1">
    <molecule id="Q9HD40-3"/>
    <property type="nucleotide sequence ID" value="XM_011513846.3"/>
</dbReference>
<dbReference type="RefSeq" id="XP_011512150.1">
    <property type="nucleotide sequence ID" value="XM_011513848.1"/>
</dbReference>
<dbReference type="RefSeq" id="XP_054206119.1">
    <molecule id="Q9HD40-3"/>
    <property type="nucleotide sequence ID" value="XM_054350144.1"/>
</dbReference>
<dbReference type="PDB" id="3HL2">
    <property type="method" value="X-ray"/>
    <property type="resolution" value="2.81 A"/>
    <property type="chains" value="A/B/C/D=1-501"/>
</dbReference>
<dbReference type="PDB" id="4ZDL">
    <property type="method" value="X-ray"/>
    <property type="resolution" value="2.26 A"/>
    <property type="chains" value="A/B=1-501"/>
</dbReference>
<dbReference type="PDB" id="4ZDO">
    <property type="method" value="X-ray"/>
    <property type="resolution" value="2.65 A"/>
    <property type="chains" value="A/B/C/D=1-501"/>
</dbReference>
<dbReference type="PDB" id="4ZDP">
    <property type="method" value="X-ray"/>
    <property type="resolution" value="2.70 A"/>
    <property type="chains" value="A/B/C/D=1-501"/>
</dbReference>
<dbReference type="PDB" id="7L1T">
    <property type="method" value="X-ray"/>
    <property type="resolution" value="2.25 A"/>
    <property type="chains" value="A=1-501"/>
</dbReference>
<dbReference type="PDB" id="7MDL">
    <property type="method" value="X-ray"/>
    <property type="resolution" value="2.32 A"/>
    <property type="chains" value="A/B/C/D=1-501"/>
</dbReference>
<dbReference type="PDB" id="8G9Z">
    <property type="method" value="X-ray"/>
    <property type="resolution" value="2.07 A"/>
    <property type="chains" value="A/B/C/D=1-501"/>
</dbReference>
<dbReference type="PDBsum" id="3HL2"/>
<dbReference type="PDBsum" id="4ZDL"/>
<dbReference type="PDBsum" id="4ZDO"/>
<dbReference type="PDBsum" id="4ZDP"/>
<dbReference type="PDBsum" id="7L1T"/>
<dbReference type="PDBsum" id="7MDL"/>
<dbReference type="PDBsum" id="8G9Z"/>
<dbReference type="SMR" id="Q9HD40"/>
<dbReference type="BioGRID" id="119280">
    <property type="interactions" value="20"/>
</dbReference>
<dbReference type="CORUM" id="Q9HD40"/>
<dbReference type="FunCoup" id="Q9HD40">
    <property type="interactions" value="2789"/>
</dbReference>
<dbReference type="IntAct" id="Q9HD40">
    <property type="interactions" value="13"/>
</dbReference>
<dbReference type="MINT" id="Q9HD40"/>
<dbReference type="STRING" id="9606.ENSP00000371535"/>
<dbReference type="DrugBank" id="DB00114">
    <property type="generic name" value="Pyridoxal phosphate"/>
</dbReference>
<dbReference type="GlyGen" id="Q9HD40">
    <property type="glycosylation" value="1 site, 1 O-linked glycan (1 site)"/>
</dbReference>
<dbReference type="iPTMnet" id="Q9HD40"/>
<dbReference type="PhosphoSitePlus" id="Q9HD40"/>
<dbReference type="BioMuta" id="SEPSECS"/>
<dbReference type="DMDM" id="62287911"/>
<dbReference type="jPOST" id="Q9HD40"/>
<dbReference type="MassIVE" id="Q9HD40"/>
<dbReference type="PaxDb" id="9606-ENSP00000371535"/>
<dbReference type="PeptideAtlas" id="Q9HD40"/>
<dbReference type="ProteomicsDB" id="81825">
    <molecule id="Q9HD40-1"/>
</dbReference>
<dbReference type="ProteomicsDB" id="81826">
    <molecule id="Q9HD40-2"/>
</dbReference>
<dbReference type="ProteomicsDB" id="81827">
    <molecule id="Q9HD40-3"/>
</dbReference>
<dbReference type="Pumba" id="Q9HD40"/>
<dbReference type="Antibodypedia" id="10200">
    <property type="antibodies" value="171 antibodies from 28 providers"/>
</dbReference>
<dbReference type="DNASU" id="51091"/>
<dbReference type="Ensembl" id="ENST00000382103.7">
    <molecule id="Q9HD40-1"/>
    <property type="protein sequence ID" value="ENSP00000371535.2"/>
    <property type="gene ID" value="ENSG00000109618.13"/>
</dbReference>
<dbReference type="Ensembl" id="ENST00000514585.5">
    <molecule id="Q9HD40-2"/>
    <property type="protein sequence ID" value="ENSP00000421880.1"/>
    <property type="gene ID" value="ENSG00000109618.13"/>
</dbReference>
<dbReference type="GeneID" id="51091"/>
<dbReference type="KEGG" id="hsa:51091"/>
<dbReference type="MANE-Select" id="ENST00000382103.7">
    <property type="protein sequence ID" value="ENSP00000371535.2"/>
    <property type="RefSeq nucleotide sequence ID" value="NM_016955.4"/>
    <property type="RefSeq protein sequence ID" value="NP_058651.3"/>
</dbReference>
<dbReference type="UCSC" id="uc003grg.4">
    <molecule id="Q9HD40-1"/>
    <property type="organism name" value="human"/>
</dbReference>
<dbReference type="AGR" id="HGNC:30605"/>
<dbReference type="CTD" id="51091"/>
<dbReference type="DisGeNET" id="51091"/>
<dbReference type="GeneCards" id="SEPSECS"/>
<dbReference type="HGNC" id="HGNC:30605">
    <property type="gene designation" value="SEPSECS"/>
</dbReference>
<dbReference type="HPA" id="ENSG00000109618">
    <property type="expression patterns" value="Tissue enhanced (liver)"/>
</dbReference>
<dbReference type="MalaCards" id="SEPSECS"/>
<dbReference type="MIM" id="613009">
    <property type="type" value="gene"/>
</dbReference>
<dbReference type="MIM" id="613811">
    <property type="type" value="phenotype"/>
</dbReference>
<dbReference type="neXtProt" id="NX_Q9HD40"/>
<dbReference type="OpenTargets" id="ENSG00000109618"/>
<dbReference type="Orphanet" id="2524">
    <property type="disease" value="Pontocerebellar hypoplasia type 2"/>
</dbReference>
<dbReference type="Orphanet" id="247198">
    <property type="disease" value="Progressive cerebello-cerebral atrophy"/>
</dbReference>
<dbReference type="PharmGKB" id="PA162402915"/>
<dbReference type="VEuPathDB" id="HostDB:ENSG00000109618"/>
<dbReference type="eggNOG" id="KOG3843">
    <property type="taxonomic scope" value="Eukaryota"/>
</dbReference>
<dbReference type="GeneTree" id="ENSGT00390000007332"/>
<dbReference type="HOGENOM" id="CLU_022508_0_0_1"/>
<dbReference type="InParanoid" id="Q9HD40"/>
<dbReference type="OMA" id="MSHANDY"/>
<dbReference type="OrthoDB" id="10263545at2759"/>
<dbReference type="PAN-GO" id="Q9HD40">
    <property type="GO annotations" value="2 GO annotations based on evolutionary models"/>
</dbReference>
<dbReference type="PhylomeDB" id="Q9HD40"/>
<dbReference type="TreeFam" id="TF314381"/>
<dbReference type="BRENDA" id="2.9.1.2">
    <property type="organism ID" value="2681"/>
</dbReference>
<dbReference type="PathwayCommons" id="Q9HD40"/>
<dbReference type="Reactome" id="R-HSA-2408557">
    <property type="pathway name" value="Selenocysteine synthesis"/>
</dbReference>
<dbReference type="SignaLink" id="Q9HD40"/>
<dbReference type="UniPathway" id="UPA00906">
    <property type="reaction ID" value="UER00898"/>
</dbReference>
<dbReference type="BioGRID-ORCS" id="51091">
    <property type="hits" value="358 hits in 1169 CRISPR screens"/>
</dbReference>
<dbReference type="ChiTaRS" id="SEPSECS">
    <property type="organism name" value="human"/>
</dbReference>
<dbReference type="EvolutionaryTrace" id="Q9HD40"/>
<dbReference type="GeneWiki" id="SEPSECS"/>
<dbReference type="GenomeRNAi" id="51091"/>
<dbReference type="Pharos" id="Q9HD40">
    <property type="development level" value="Tbio"/>
</dbReference>
<dbReference type="PRO" id="PR:Q9HD40"/>
<dbReference type="Proteomes" id="UP000005640">
    <property type="component" value="Chromosome 4"/>
</dbReference>
<dbReference type="RNAct" id="Q9HD40">
    <property type="molecule type" value="protein"/>
</dbReference>
<dbReference type="Bgee" id="ENSG00000109618">
    <property type="expression patterns" value="Expressed in ileal mucosa and 151 other cell types or tissues"/>
</dbReference>
<dbReference type="ExpressionAtlas" id="Q9HD40">
    <property type="expression patterns" value="baseline and differential"/>
</dbReference>
<dbReference type="GO" id="GO:0005737">
    <property type="term" value="C:cytoplasm"/>
    <property type="evidence" value="ECO:0000250"/>
    <property type="project" value="HGNC-UCL"/>
</dbReference>
<dbReference type="GO" id="GO:0005829">
    <property type="term" value="C:cytosol"/>
    <property type="evidence" value="ECO:0000304"/>
    <property type="project" value="Reactome"/>
</dbReference>
<dbReference type="GO" id="GO:0005634">
    <property type="term" value="C:nucleus"/>
    <property type="evidence" value="ECO:0000250"/>
    <property type="project" value="HGNC-UCL"/>
</dbReference>
<dbReference type="GO" id="GO:0098621">
    <property type="term" value="F:O-phosphoseryl-tRNA(Sec) selenium transferase activity"/>
    <property type="evidence" value="ECO:0007669"/>
    <property type="project" value="UniProtKB-EC"/>
</dbReference>
<dbReference type="GO" id="GO:0000049">
    <property type="term" value="F:tRNA binding"/>
    <property type="evidence" value="ECO:0000250"/>
    <property type="project" value="HGNC-UCL"/>
</dbReference>
<dbReference type="GO" id="GO:0001717">
    <property type="term" value="P:conversion of seryl-tRNAsec to selenocys-tRNAsec"/>
    <property type="evidence" value="ECO:0007669"/>
    <property type="project" value="InterPro"/>
</dbReference>
<dbReference type="GO" id="GO:0001514">
    <property type="term" value="P:selenocysteine incorporation"/>
    <property type="evidence" value="ECO:0000250"/>
    <property type="project" value="HGNC-UCL"/>
</dbReference>
<dbReference type="FunFam" id="3.40.640.10:FF:000070">
    <property type="entry name" value="O-phosphoseryl-tRNA(Sec) selenium transferase"/>
    <property type="match status" value="1"/>
</dbReference>
<dbReference type="Gene3D" id="3.40.640.10">
    <property type="entry name" value="Type I PLP-dependent aspartate aminotransferase-like (Major domain)"/>
    <property type="match status" value="1"/>
</dbReference>
<dbReference type="InterPro" id="IPR019793">
    <property type="entry name" value="Peroxidases_heam-ligand_BS"/>
</dbReference>
<dbReference type="InterPro" id="IPR015424">
    <property type="entry name" value="PyrdxlP-dep_Trfase"/>
</dbReference>
<dbReference type="InterPro" id="IPR015421">
    <property type="entry name" value="PyrdxlP-dep_Trfase_major"/>
</dbReference>
<dbReference type="InterPro" id="IPR019872">
    <property type="entry name" value="Sec-tRNA_Se_transferase"/>
</dbReference>
<dbReference type="InterPro" id="IPR008829">
    <property type="entry name" value="SepSecS/SepCysS"/>
</dbReference>
<dbReference type="NCBIfam" id="TIGR03531">
    <property type="entry name" value="selenium_SpcS"/>
    <property type="match status" value="1"/>
</dbReference>
<dbReference type="PANTHER" id="PTHR12944:SF2">
    <property type="entry name" value="O-PHOSPHOSERYL-TRNA(SEC) SELENIUM TRANSFERASE"/>
    <property type="match status" value="1"/>
</dbReference>
<dbReference type="PANTHER" id="PTHR12944">
    <property type="entry name" value="SOLUBLE LIVER ANTIGEN/LIVER PANCREAS ANTIGEN"/>
    <property type="match status" value="1"/>
</dbReference>
<dbReference type="Pfam" id="PF05889">
    <property type="entry name" value="SepSecS"/>
    <property type="match status" value="1"/>
</dbReference>
<dbReference type="PIRSF" id="PIRSF017689">
    <property type="entry name" value="SepSecS"/>
    <property type="match status" value="1"/>
</dbReference>
<dbReference type="SUPFAM" id="SSF53383">
    <property type="entry name" value="PLP-dependent transferases"/>
    <property type="match status" value="1"/>
</dbReference>
<evidence type="ECO:0000250" key="1">
    <source>
        <dbReference type="UniProtKB" id="Q6P6M7"/>
    </source>
</evidence>
<evidence type="ECO:0000269" key="2">
    <source>
    </source>
</evidence>
<evidence type="ECO:0000269" key="3">
    <source>
    </source>
</evidence>
<evidence type="ECO:0000269" key="4">
    <source>
    </source>
</evidence>
<evidence type="ECO:0000269" key="5">
    <source>
    </source>
</evidence>
<evidence type="ECO:0000269" key="6">
    <source>
    </source>
</evidence>
<evidence type="ECO:0000303" key="7">
    <source>
    </source>
</evidence>
<evidence type="ECO:0000303" key="8">
    <source>
    </source>
</evidence>
<evidence type="ECO:0000305" key="9"/>
<evidence type="ECO:0007744" key="10">
    <source>
    </source>
</evidence>
<evidence type="ECO:0007829" key="11">
    <source>
        <dbReference type="PDB" id="4ZDL"/>
    </source>
</evidence>
<evidence type="ECO:0007829" key="12">
    <source>
        <dbReference type="PDB" id="7L1T"/>
    </source>
</evidence>
<evidence type="ECO:0007829" key="13">
    <source>
        <dbReference type="PDB" id="8G9Z"/>
    </source>
</evidence>
<reference key="1">
    <citation type="journal article" date="2004" name="Nat. Genet.">
        <title>Complete sequencing and characterization of 21,243 full-length human cDNAs.</title>
        <authorList>
            <person name="Ota T."/>
            <person name="Suzuki Y."/>
            <person name="Nishikawa T."/>
            <person name="Otsuki T."/>
            <person name="Sugiyama T."/>
            <person name="Irie R."/>
            <person name="Wakamatsu A."/>
            <person name="Hayashi K."/>
            <person name="Sato H."/>
            <person name="Nagai K."/>
            <person name="Kimura K."/>
            <person name="Makita H."/>
            <person name="Sekine M."/>
            <person name="Obayashi M."/>
            <person name="Nishi T."/>
            <person name="Shibahara T."/>
            <person name="Tanaka T."/>
            <person name="Ishii S."/>
            <person name="Yamamoto J."/>
            <person name="Saito K."/>
            <person name="Kawai Y."/>
            <person name="Isono Y."/>
            <person name="Nakamura Y."/>
            <person name="Nagahari K."/>
            <person name="Murakami K."/>
            <person name="Yasuda T."/>
            <person name="Iwayanagi T."/>
            <person name="Wagatsuma M."/>
            <person name="Shiratori A."/>
            <person name="Sudo H."/>
            <person name="Hosoiri T."/>
            <person name="Kaku Y."/>
            <person name="Kodaira H."/>
            <person name="Kondo H."/>
            <person name="Sugawara M."/>
            <person name="Takahashi M."/>
            <person name="Kanda K."/>
            <person name="Yokoi T."/>
            <person name="Furuya T."/>
            <person name="Kikkawa E."/>
            <person name="Omura Y."/>
            <person name="Abe K."/>
            <person name="Kamihara K."/>
            <person name="Katsuta N."/>
            <person name="Sato K."/>
            <person name="Tanikawa M."/>
            <person name="Yamazaki M."/>
            <person name="Ninomiya K."/>
            <person name="Ishibashi T."/>
            <person name="Yamashita H."/>
            <person name="Murakawa K."/>
            <person name="Fujimori K."/>
            <person name="Tanai H."/>
            <person name="Kimata M."/>
            <person name="Watanabe M."/>
            <person name="Hiraoka S."/>
            <person name="Chiba Y."/>
            <person name="Ishida S."/>
            <person name="Ono Y."/>
            <person name="Takiguchi S."/>
            <person name="Watanabe S."/>
            <person name="Yosida M."/>
            <person name="Hotuta T."/>
            <person name="Kusano J."/>
            <person name="Kanehori K."/>
            <person name="Takahashi-Fujii A."/>
            <person name="Hara H."/>
            <person name="Tanase T.-O."/>
            <person name="Nomura Y."/>
            <person name="Togiya S."/>
            <person name="Komai F."/>
            <person name="Hara R."/>
            <person name="Takeuchi K."/>
            <person name="Arita M."/>
            <person name="Imose N."/>
            <person name="Musashino K."/>
            <person name="Yuuki H."/>
            <person name="Oshima A."/>
            <person name="Sasaki N."/>
            <person name="Aotsuka S."/>
            <person name="Yoshikawa Y."/>
            <person name="Matsunawa H."/>
            <person name="Ichihara T."/>
            <person name="Shiohata N."/>
            <person name="Sano S."/>
            <person name="Moriya S."/>
            <person name="Momiyama H."/>
            <person name="Satoh N."/>
            <person name="Takami S."/>
            <person name="Terashima Y."/>
            <person name="Suzuki O."/>
            <person name="Nakagawa S."/>
            <person name="Senoh A."/>
            <person name="Mizoguchi H."/>
            <person name="Goto Y."/>
            <person name="Shimizu F."/>
            <person name="Wakebe H."/>
            <person name="Hishigaki H."/>
            <person name="Watanabe T."/>
            <person name="Sugiyama A."/>
            <person name="Takemoto M."/>
            <person name="Kawakami B."/>
            <person name="Yamazaki M."/>
            <person name="Watanabe K."/>
            <person name="Kumagai A."/>
            <person name="Itakura S."/>
            <person name="Fukuzumi Y."/>
            <person name="Fujimori Y."/>
            <person name="Komiyama M."/>
            <person name="Tashiro H."/>
            <person name="Tanigami A."/>
            <person name="Fujiwara T."/>
            <person name="Ono T."/>
            <person name="Yamada K."/>
            <person name="Fujii Y."/>
            <person name="Ozaki K."/>
            <person name="Hirao M."/>
            <person name="Ohmori Y."/>
            <person name="Kawabata A."/>
            <person name="Hikiji T."/>
            <person name="Kobatake N."/>
            <person name="Inagaki H."/>
            <person name="Ikema Y."/>
            <person name="Okamoto S."/>
            <person name="Okitani R."/>
            <person name="Kawakami T."/>
            <person name="Noguchi S."/>
            <person name="Itoh T."/>
            <person name="Shigeta K."/>
            <person name="Senba T."/>
            <person name="Matsumura K."/>
            <person name="Nakajima Y."/>
            <person name="Mizuno T."/>
            <person name="Morinaga M."/>
            <person name="Sasaki M."/>
            <person name="Togashi T."/>
            <person name="Oyama M."/>
            <person name="Hata H."/>
            <person name="Watanabe M."/>
            <person name="Komatsu T."/>
            <person name="Mizushima-Sugano J."/>
            <person name="Satoh T."/>
            <person name="Shirai Y."/>
            <person name="Takahashi Y."/>
            <person name="Nakagawa K."/>
            <person name="Okumura K."/>
            <person name="Nagase T."/>
            <person name="Nomura N."/>
            <person name="Kikuchi H."/>
            <person name="Masuho Y."/>
            <person name="Yamashita R."/>
            <person name="Nakai K."/>
            <person name="Yada T."/>
            <person name="Nakamura Y."/>
            <person name="Ohara O."/>
            <person name="Isogai T."/>
            <person name="Sugano S."/>
        </authorList>
    </citation>
    <scope>NUCLEOTIDE SEQUENCE [LARGE SCALE MRNA] (ISOFORM 1)</scope>
    <source>
        <tissue>Testis</tissue>
    </source>
</reference>
<reference key="2">
    <citation type="journal article" date="2007" name="BMC Genomics">
        <title>The full-ORF clone resource of the German cDNA consortium.</title>
        <authorList>
            <person name="Bechtel S."/>
            <person name="Rosenfelder H."/>
            <person name="Duda A."/>
            <person name="Schmidt C.P."/>
            <person name="Ernst U."/>
            <person name="Wellenreuther R."/>
            <person name="Mehrle A."/>
            <person name="Schuster C."/>
            <person name="Bahr A."/>
            <person name="Bloecker H."/>
            <person name="Heubner D."/>
            <person name="Hoerlein A."/>
            <person name="Michel G."/>
            <person name="Wedler H."/>
            <person name="Koehrer K."/>
            <person name="Ottenwaelder B."/>
            <person name="Poustka A."/>
            <person name="Wiemann S."/>
            <person name="Schupp I."/>
        </authorList>
    </citation>
    <scope>NUCLEOTIDE SEQUENCE [LARGE SCALE MRNA] (ISOFORM 1)</scope>
    <source>
        <tissue>Endometrium</tissue>
    </source>
</reference>
<reference key="3">
    <citation type="journal article" date="2005" name="Nature">
        <title>Generation and annotation of the DNA sequences of human chromosomes 2 and 4.</title>
        <authorList>
            <person name="Hillier L.W."/>
            <person name="Graves T.A."/>
            <person name="Fulton R.S."/>
            <person name="Fulton L.A."/>
            <person name="Pepin K.H."/>
            <person name="Minx P."/>
            <person name="Wagner-McPherson C."/>
            <person name="Layman D."/>
            <person name="Wylie K."/>
            <person name="Sekhon M."/>
            <person name="Becker M.C."/>
            <person name="Fewell G.A."/>
            <person name="Delehaunty K.D."/>
            <person name="Miner T.L."/>
            <person name="Nash W.E."/>
            <person name="Kremitzki C."/>
            <person name="Oddy L."/>
            <person name="Du H."/>
            <person name="Sun H."/>
            <person name="Bradshaw-Cordum H."/>
            <person name="Ali J."/>
            <person name="Carter J."/>
            <person name="Cordes M."/>
            <person name="Harris A."/>
            <person name="Isak A."/>
            <person name="van Brunt A."/>
            <person name="Nguyen C."/>
            <person name="Du F."/>
            <person name="Courtney L."/>
            <person name="Kalicki J."/>
            <person name="Ozersky P."/>
            <person name="Abbott S."/>
            <person name="Armstrong J."/>
            <person name="Belter E.A."/>
            <person name="Caruso L."/>
            <person name="Cedroni M."/>
            <person name="Cotton M."/>
            <person name="Davidson T."/>
            <person name="Desai A."/>
            <person name="Elliott G."/>
            <person name="Erb T."/>
            <person name="Fronick C."/>
            <person name="Gaige T."/>
            <person name="Haakenson W."/>
            <person name="Haglund K."/>
            <person name="Holmes A."/>
            <person name="Harkins R."/>
            <person name="Kim K."/>
            <person name="Kruchowski S.S."/>
            <person name="Strong C.M."/>
            <person name="Grewal N."/>
            <person name="Goyea E."/>
            <person name="Hou S."/>
            <person name="Levy A."/>
            <person name="Martinka S."/>
            <person name="Mead K."/>
            <person name="McLellan M.D."/>
            <person name="Meyer R."/>
            <person name="Randall-Maher J."/>
            <person name="Tomlinson C."/>
            <person name="Dauphin-Kohlberg S."/>
            <person name="Kozlowicz-Reilly A."/>
            <person name="Shah N."/>
            <person name="Swearengen-Shahid S."/>
            <person name="Snider J."/>
            <person name="Strong J.T."/>
            <person name="Thompson J."/>
            <person name="Yoakum M."/>
            <person name="Leonard S."/>
            <person name="Pearman C."/>
            <person name="Trani L."/>
            <person name="Radionenko M."/>
            <person name="Waligorski J.E."/>
            <person name="Wang C."/>
            <person name="Rock S.M."/>
            <person name="Tin-Wollam A.-M."/>
            <person name="Maupin R."/>
            <person name="Latreille P."/>
            <person name="Wendl M.C."/>
            <person name="Yang S.-P."/>
            <person name="Pohl C."/>
            <person name="Wallis J.W."/>
            <person name="Spieth J."/>
            <person name="Bieri T.A."/>
            <person name="Berkowicz N."/>
            <person name="Nelson J.O."/>
            <person name="Osborne J."/>
            <person name="Ding L."/>
            <person name="Meyer R."/>
            <person name="Sabo A."/>
            <person name="Shotland Y."/>
            <person name="Sinha P."/>
            <person name="Wohldmann P.E."/>
            <person name="Cook L.L."/>
            <person name="Hickenbotham M.T."/>
            <person name="Eldred J."/>
            <person name="Williams D."/>
            <person name="Jones T.A."/>
            <person name="She X."/>
            <person name="Ciccarelli F.D."/>
            <person name="Izaurralde E."/>
            <person name="Taylor J."/>
            <person name="Schmutz J."/>
            <person name="Myers R.M."/>
            <person name="Cox D.R."/>
            <person name="Huang X."/>
            <person name="McPherson J.D."/>
            <person name="Mardis E.R."/>
            <person name="Clifton S.W."/>
            <person name="Warren W.C."/>
            <person name="Chinwalla A.T."/>
            <person name="Eddy S.R."/>
            <person name="Marra M.A."/>
            <person name="Ovcharenko I."/>
            <person name="Furey T.S."/>
            <person name="Miller W."/>
            <person name="Eichler E.E."/>
            <person name="Bork P."/>
            <person name="Suyama M."/>
            <person name="Torrents D."/>
            <person name="Waterston R.H."/>
            <person name="Wilson R.K."/>
        </authorList>
    </citation>
    <scope>NUCLEOTIDE SEQUENCE [LARGE SCALE GENOMIC DNA]</scope>
</reference>
<reference key="4">
    <citation type="submission" date="2005-07" db="EMBL/GenBank/DDBJ databases">
        <authorList>
            <person name="Mural R.J."/>
            <person name="Istrail S."/>
            <person name="Sutton G.G."/>
            <person name="Florea L."/>
            <person name="Halpern A.L."/>
            <person name="Mobarry C.M."/>
            <person name="Lippert R."/>
            <person name="Walenz B."/>
            <person name="Shatkay H."/>
            <person name="Dew I."/>
            <person name="Miller J.R."/>
            <person name="Flanigan M.J."/>
            <person name="Edwards N.J."/>
            <person name="Bolanos R."/>
            <person name="Fasulo D."/>
            <person name="Halldorsson B.V."/>
            <person name="Hannenhalli S."/>
            <person name="Turner R."/>
            <person name="Yooseph S."/>
            <person name="Lu F."/>
            <person name="Nusskern D.R."/>
            <person name="Shue B.C."/>
            <person name="Zheng X.H."/>
            <person name="Zhong F."/>
            <person name="Delcher A.L."/>
            <person name="Huson D.H."/>
            <person name="Kravitz S.A."/>
            <person name="Mouchard L."/>
            <person name="Reinert K."/>
            <person name="Remington K.A."/>
            <person name="Clark A.G."/>
            <person name="Waterman M.S."/>
            <person name="Eichler E.E."/>
            <person name="Adams M.D."/>
            <person name="Hunkapiller M.W."/>
            <person name="Myers E.W."/>
            <person name="Venter J.C."/>
        </authorList>
    </citation>
    <scope>NUCLEOTIDE SEQUENCE [LARGE SCALE GENOMIC DNA]</scope>
</reference>
<reference key="5">
    <citation type="journal article" date="2004" name="Genome Res.">
        <title>The status, quality, and expansion of the NIH full-length cDNA project: the Mammalian Gene Collection (MGC).</title>
        <authorList>
            <consortium name="The MGC Project Team"/>
        </authorList>
    </citation>
    <scope>NUCLEOTIDE SEQUENCE [LARGE SCALE MRNA] (ISOFORMS 2 AND 3)</scope>
    <source>
        <tissue>Brain</tissue>
        <tissue>Muscle</tissue>
    </source>
</reference>
<reference key="6">
    <citation type="journal article" date="2000" name="Lancet">
        <title>Identification of target antigen for SLA/LP autoantibodies in autoimmune hepatitis.</title>
        <authorList>
            <person name="Wies I."/>
            <person name="Brunner S."/>
            <person name="Henninger J."/>
            <person name="Herkel J."/>
            <person name="Kanzler S."/>
            <person name="Meyer zum Bueschenfelde K.-H."/>
            <person name="Lohse A.W."/>
        </authorList>
    </citation>
    <scope>NUCLEOTIDE SEQUENCE [MRNA] OF 29-501 (ISOFORM 1)</scope>
    <scope>NUCLEOTIDE SEQUENCE [MRNA] OF 29-501 (ISOFORM 2)</scope>
    <source>
        <tissue>Liver</tissue>
        <tissue>T-cell lymphoma</tissue>
    </source>
</reference>
<reference key="7">
    <citation type="journal article" date="2000" name="Clin. Exp. Immunol.">
        <title>Isolation and characterization of cDNA encoding the antigenic protein of the human tRNP(Ser)Sec complex recognized by autoantibodies from patients with type-1 autoimmune hepatitis.</title>
        <authorList>
            <person name="Costa M."/>
            <person name="Rodriguez-Sanchez J.L."/>
            <person name="Czaja A.J."/>
            <person name="Gelpi C."/>
        </authorList>
    </citation>
    <scope>NUCLEOTIDE SEQUENCE [MRNA] OF 61-501 (ISOFORM 1)</scope>
    <source>
        <tissue>Liver</tissue>
    </source>
</reference>
<reference key="8">
    <citation type="submission" date="2000-06" db="EMBL/GenBank/DDBJ databases">
        <title>Coding sequence of the human SLA/LP autoantigen.</title>
        <authorList>
            <person name="Seelig H.-P."/>
            <person name="Wiemann C."/>
            <person name="Plaikner M."/>
            <person name="Schranz P."/>
            <person name="Seelig R."/>
            <person name="Renz M."/>
        </authorList>
    </citation>
    <scope>NUCLEOTIDE SEQUENCE [MRNA] OF 61-501 (ISOFORM 1)</scope>
    <source>
        <tissue>Liver</tissue>
    </source>
</reference>
<reference key="9">
    <citation type="journal article" date="2001" name="Hepatology">
        <title>Soluble liver antigen: isolation of a 35-kd recombinant protein (SLA-p35) specifically recognizing sera from patients with autoimmune hepatitis.</title>
        <authorList>
            <person name="Volkmann M."/>
            <person name="Martin L."/>
            <person name="Baeurle A."/>
            <person name="Heid H."/>
            <person name="Strassburg C.P."/>
            <person name="Trautwein C."/>
            <person name="Fiehn W."/>
            <person name="Manns M.P."/>
        </authorList>
    </citation>
    <scope>NUCLEOTIDE SEQUENCE [MRNA] OF 208-501</scope>
</reference>
<reference key="10">
    <citation type="journal article" date="2002" name="Hepatology">
        <title>Fine specificity of autoantibodies to soluble liver antigen and liver/pancreas.</title>
        <authorList>
            <person name="Herkel J."/>
            <person name="Heidrich B."/>
            <person name="Nieraad N."/>
            <person name="Wies I."/>
            <person name="Rother M."/>
            <person name="Lohse A.W."/>
        </authorList>
    </citation>
    <scope>NUCLEOTIDE SEQUENCE [MRNA] OF 434-493</scope>
    <scope>SLA/LP EPITOPE MAPPING</scope>
</reference>
<reference key="11">
    <citation type="journal article" date="2006" name="Proc. Natl. Acad. Sci. U.S.A.">
        <title>RNA-dependent conversion of phosphoserine forms selenocysteine in eukaryotes and archaea.</title>
        <authorList>
            <person name="Yuan J."/>
            <person name="Palioura S."/>
            <person name="Salazar J.C."/>
            <person name="Su D."/>
            <person name="O'Donoghue P."/>
            <person name="Hohn M.J."/>
            <person name="Cardoso A.M."/>
            <person name="Whitman W.B."/>
            <person name="Soell D."/>
        </authorList>
    </citation>
    <scope>FUNCTION</scope>
    <scope>CATALYTIC ACTIVITY</scope>
    <scope>PATHWAY</scope>
    <scope>COFACTOR</scope>
    <scope>MUTAGENESIS OF LYS-284</scope>
</reference>
<reference key="12">
    <citation type="journal article" date="2009" name="Anal. Chem.">
        <title>Lys-N and trypsin cover complementary parts of the phosphoproteome in a refined SCX-based approach.</title>
        <authorList>
            <person name="Gauci S."/>
            <person name="Helbig A.O."/>
            <person name="Slijper M."/>
            <person name="Krijgsveld J."/>
            <person name="Heck A.J."/>
            <person name="Mohammed S."/>
        </authorList>
    </citation>
    <scope>IDENTIFICATION BY MASS SPECTROMETRY [LARGE SCALE ANALYSIS]</scope>
</reference>
<reference key="13">
    <citation type="journal article" date="2013" name="J. Proteome Res.">
        <title>Toward a comprehensive characterization of a human cancer cell phosphoproteome.</title>
        <authorList>
            <person name="Zhou H."/>
            <person name="Di Palma S."/>
            <person name="Preisinger C."/>
            <person name="Peng M."/>
            <person name="Polat A.N."/>
            <person name="Heck A.J."/>
            <person name="Mohammed S."/>
        </authorList>
    </citation>
    <scope>PHOSPHORYLATION [LARGE SCALE ANALYSIS] AT SER-14</scope>
    <scope>IDENTIFICATION BY MASS SPECTROMETRY [LARGE SCALE ANALYSIS]</scope>
    <source>
        <tissue>Erythroleukemia</tissue>
    </source>
</reference>
<reference key="14">
    <citation type="journal article" date="2014" name="J. Proteomics">
        <title>An enzyme assisted RP-RPLC approach for in-depth analysis of human liver phosphoproteome.</title>
        <authorList>
            <person name="Bian Y."/>
            <person name="Song C."/>
            <person name="Cheng K."/>
            <person name="Dong M."/>
            <person name="Wang F."/>
            <person name="Huang J."/>
            <person name="Sun D."/>
            <person name="Wang L."/>
            <person name="Ye M."/>
            <person name="Zou H."/>
        </authorList>
    </citation>
    <scope>IDENTIFICATION BY MASS SPECTROMETRY [LARGE SCALE ANALYSIS]</scope>
    <source>
        <tissue>Liver</tissue>
    </source>
</reference>
<reference key="15">
    <citation type="journal article" date="2009" name="Science">
        <title>The human SepSecS-tRNASec complex reveals the mechanism of selenocysteine formation.</title>
        <authorList>
            <person name="Palioura S."/>
            <person name="Sherrer R.L."/>
            <person name="Steitz T.A."/>
            <person name="Soll D."/>
            <person name="Simonovic M."/>
        </authorList>
    </citation>
    <scope>X-RAY CRYSTALLOGRAPHY (2.81 ANGSTROMS) IN COMPLEX WITH TRNA AND PYRIDOXAL PHOSPHATE</scope>
    <scope>SUBUNIT</scope>
    <scope>SUBSTRATE-BINDING SITES</scope>
    <scope>COFACTOR</scope>
    <scope>MUTAGENESIS OF ARG-75; ARG-97; GLN-105; LYS-173 AND ARG-313</scope>
    <scope>REGION</scope>
</reference>
<reference key="16">
    <citation type="journal article" date="2010" name="Am. J. Hum. Genet.">
        <title>Mutations disrupting selenocysteine formation cause progressive cerebello-cerebral atrophy.</title>
        <authorList>
            <person name="Agamy O."/>
            <person name="Ben Zeev B."/>
            <person name="Lev D."/>
            <person name="Marcus B."/>
            <person name="Fine D."/>
            <person name="Su D."/>
            <person name="Narkis G."/>
            <person name="Ofir R."/>
            <person name="Hoffmann C."/>
            <person name="Leshinsky-Silver E."/>
            <person name="Flusser H."/>
            <person name="Sivan S."/>
            <person name="Soll D."/>
            <person name="Lerman-Sagie T."/>
            <person name="Birk O.S."/>
        </authorList>
    </citation>
    <scope>VARIANTS PCH2D THR-239 AND CYS-334</scope>
    <scope>CHARACTERIZATION OF VARIANTS PCH2D THR-239 AND CYS-334</scope>
</reference>
<reference key="17">
    <citation type="journal article" date="2015" name="Neurology">
        <title>Selenoprotein biosynthesis defect causes progressive encephalopathy with elevated lactate.</title>
        <authorList>
            <person name="Anttonen A.K."/>
            <person name="Hilander T."/>
            <person name="Linnankivi T."/>
            <person name="Isohanni P."/>
            <person name="French R.L."/>
            <person name="Liu Y."/>
            <person name="Simonovic M."/>
            <person name="Soell D."/>
            <person name="Somer M."/>
            <person name="Muth-Pawlak D."/>
            <person name="Corthals G.L."/>
            <person name="Laari A."/>
            <person name="Ylikallio E."/>
            <person name="Laehde M."/>
            <person name="Valanne L."/>
            <person name="Loennqvist T."/>
            <person name="Pihko H."/>
            <person name="Paetau A."/>
            <person name="Lehesjoki A.E."/>
            <person name="Suomalainen A."/>
            <person name="Tyynismaa H."/>
        </authorList>
    </citation>
    <scope>VARIANT PCH2D SER-325</scope>
</reference>
<organism>
    <name type="scientific">Homo sapiens</name>
    <name type="common">Human</name>
    <dbReference type="NCBI Taxonomy" id="9606"/>
    <lineage>
        <taxon>Eukaryota</taxon>
        <taxon>Metazoa</taxon>
        <taxon>Chordata</taxon>
        <taxon>Craniata</taxon>
        <taxon>Vertebrata</taxon>
        <taxon>Euteleostomi</taxon>
        <taxon>Mammalia</taxon>
        <taxon>Eutheria</taxon>
        <taxon>Euarchontoglires</taxon>
        <taxon>Primates</taxon>
        <taxon>Haplorrhini</taxon>
        <taxon>Catarrhini</taxon>
        <taxon>Hominidae</taxon>
        <taxon>Homo</taxon>
    </lineage>
</organism>
<comment type="function">
    <text evidence="3">Converts O-phosphoseryl-tRNA(Sec) to selenocysteinyl-tRNA(Sec) required for selenoprotein biosynthesis.</text>
</comment>
<comment type="catalytic activity">
    <reaction evidence="3">
        <text>O-phospho-L-seryl-tRNA(Sec) + selenophosphate + H2O = L-selenocysteinyl-tRNA(Sec) + 2 phosphate</text>
        <dbReference type="Rhea" id="RHEA:25041"/>
        <dbReference type="Rhea" id="RHEA-COMP:9743"/>
        <dbReference type="Rhea" id="RHEA-COMP:9947"/>
        <dbReference type="ChEBI" id="CHEBI:15377"/>
        <dbReference type="ChEBI" id="CHEBI:16144"/>
        <dbReference type="ChEBI" id="CHEBI:43474"/>
        <dbReference type="ChEBI" id="CHEBI:78551"/>
        <dbReference type="ChEBI" id="CHEBI:78573"/>
        <dbReference type="EC" id="2.9.1.2"/>
    </reaction>
</comment>
<comment type="cofactor">
    <cofactor evidence="3 4">
        <name>pyridoxal 5'-phosphate</name>
        <dbReference type="ChEBI" id="CHEBI:597326"/>
    </cofactor>
</comment>
<comment type="pathway">
    <text evidence="3">Aminoacyl-tRNA biosynthesis; selenocysteinyl-tRNA(Sec) biosynthesis; selenocysteinyl-tRNA(Sec) from L-seryl-tRNA(Sec) (archaeal/eukaryal route): step 2/2.</text>
</comment>
<comment type="subunit">
    <text evidence="4">Homotetramer formed by a catalytic dimer and a non-catalytic dimer serving as a binding platform that orients tRNASec for catalysis. Each tetramer binds the CCA ends of two tRNAs which point to the active sites of the catalytic dimer.</text>
</comment>
<comment type="interaction">
    <interactant intactId="EBI-6163446">
        <id>Q9HD40</id>
    </interactant>
    <interactant intactId="EBI-6163428">
        <id>P04591</id>
        <label>gag</label>
    </interactant>
    <organismsDiffer>true</organismsDiffer>
    <experiments>3</experiments>
</comment>
<comment type="interaction">
    <interactant intactId="EBI-6163446">
        <id>Q9HD40</id>
    </interactant>
    <interactant intactId="EBI-6179719">
        <id>PRO_0000038593</id>
        <label>gag</label>
        <dbReference type="UniProtKB" id="P04591"/>
    </interactant>
    <organismsDiffer>true</organismsDiffer>
    <experiments>5</experiments>
</comment>
<comment type="interaction">
    <interactant intactId="EBI-12190001">
        <id>Q9HD40-3</id>
    </interactant>
    <interactant intactId="EBI-740376">
        <id>Q86UW9</id>
        <label>DTX2</label>
    </interactant>
    <organismsDiffer>false</organismsDiffer>
    <experiments>3</experiments>
</comment>
<comment type="subcellular location">
    <subcellularLocation>
        <location evidence="9">Cytoplasm</location>
    </subcellularLocation>
</comment>
<comment type="alternative products">
    <event type="alternative splicing"/>
    <isoform>
        <id>Q9HD40-1</id>
        <name>1</name>
        <sequence type="displayed"/>
    </isoform>
    <isoform>
        <id>Q9HD40-2</id>
        <name>2</name>
        <sequence type="described" ref="VSP_038078 VSP_038079"/>
    </isoform>
    <isoform>
        <id>Q9HD40-3</id>
        <name>3</name>
        <sequence type="described" ref="VSP_038080"/>
    </isoform>
</comment>
<comment type="tissue specificity">
    <text>Primarily expressed in liver, pancreas, kidney and lung. Overexpressed in PHA-stimulated T-cells.</text>
</comment>
<comment type="disease" evidence="5 6">
    <disease id="DI-03066">
        <name>Pontocerebellar hypoplasia 2D</name>
        <acronym>PCH2D</acronym>
        <description>A disorder characterized by postnatal onset of progressive atrophy of the cerebrum and cerebellum, microcephaly, profound intellectual disability, spasticity, and variable seizures.</description>
        <dbReference type="MIM" id="613811"/>
    </disease>
    <text>The disease is caused by variants affecting the gene represented in this entry.</text>
</comment>
<comment type="miscellaneous">
    <text>Possible diagnostic marker for autoimmune hepatitis (AIH).</text>
</comment>
<comment type="miscellaneous">
    <molecule>Isoform 2</molecule>
    <text evidence="9">May be produced at very low levels due to a premature stop codon in the mRNA, leading to nonsense-mediated mRNA decay.</text>
</comment>
<comment type="similarity">
    <text evidence="9">Belongs to the SepSecS family.</text>
</comment>
<comment type="sequence caution" evidence="9">
    <conflict type="erroneous translation">
        <sequence resource="EMBL-CDS" id="AAD33963"/>
    </conflict>
    <text>Wrong choice of CDS.</text>
</comment>
<comment type="sequence caution" evidence="9">
    <conflict type="erroneous translation">
        <sequence resource="EMBL-CDS" id="AAH23539"/>
    </conflict>
    <text>Wrong choice of CDS.</text>
</comment>
<comment type="sequence caution" evidence="9">
    <conflict type="erroneous initiation">
        <sequence resource="EMBL-CDS" id="CAB62209"/>
    </conflict>
    <text>Extended N-terminus.</text>
</comment>
<comment type="sequence caution" evidence="9">
    <conflict type="frameshift">
        <sequence resource="EMBL-CDS" id="CAB89517"/>
    </conflict>
</comment>
<gene>
    <name type="primary">SEPSECS</name>
    <name type="synonym">TRNP48</name>
</gene>
<name>SPCS_HUMAN</name>